<protein>
    <recommendedName>
        <fullName evidence="1">Phosphoglycerate kinase</fullName>
        <ecNumber evidence="1">2.7.2.3</ecNumber>
    </recommendedName>
</protein>
<evidence type="ECO:0000255" key="1">
    <source>
        <dbReference type="HAMAP-Rule" id="MF_00145"/>
    </source>
</evidence>
<evidence type="ECO:0000256" key="2">
    <source>
        <dbReference type="SAM" id="MobiDB-lite"/>
    </source>
</evidence>
<proteinExistence type="inferred from homology"/>
<reference key="1">
    <citation type="journal article" date="1999" name="Science">
        <title>Genome sequence of the radioresistant bacterium Deinococcus radiodurans R1.</title>
        <authorList>
            <person name="White O."/>
            <person name="Eisen J.A."/>
            <person name="Heidelberg J.F."/>
            <person name="Hickey E.K."/>
            <person name="Peterson J.D."/>
            <person name="Dodson R.J."/>
            <person name="Haft D.H."/>
            <person name="Gwinn M.L."/>
            <person name="Nelson W.C."/>
            <person name="Richardson D.L."/>
            <person name="Moffat K.S."/>
            <person name="Qin H."/>
            <person name="Jiang L."/>
            <person name="Pamphile W."/>
            <person name="Crosby M."/>
            <person name="Shen M."/>
            <person name="Vamathevan J.J."/>
            <person name="Lam P."/>
            <person name="McDonald L.A."/>
            <person name="Utterback T.R."/>
            <person name="Zalewski C."/>
            <person name="Makarova K.S."/>
            <person name="Aravind L."/>
            <person name="Daly M.J."/>
            <person name="Minton K.W."/>
            <person name="Fleischmann R.D."/>
            <person name="Ketchum K.A."/>
            <person name="Nelson K.E."/>
            <person name="Salzberg S.L."/>
            <person name="Smith H.O."/>
            <person name="Venter J.C."/>
            <person name="Fraser C.M."/>
        </authorList>
    </citation>
    <scope>NUCLEOTIDE SEQUENCE [LARGE SCALE GENOMIC DNA]</scope>
    <source>
        <strain>ATCC 13939 / DSM 20539 / JCM 16871 / CCUG 27074 / LMG 4051 / NBRC 15346 / NCIMB 9279 / VKM B-1422 / R1</strain>
    </source>
</reference>
<accession>Q9RUP2</accession>
<feature type="chain" id="PRO_0000145939" description="Phosphoglycerate kinase">
    <location>
        <begin position="1"/>
        <end position="411"/>
    </location>
</feature>
<feature type="region of interest" description="Disordered" evidence="2">
    <location>
        <begin position="1"/>
        <end position="24"/>
    </location>
</feature>
<feature type="binding site" evidence="1">
    <location>
        <begin position="41"/>
        <end position="43"/>
    </location>
    <ligand>
        <name>substrate</name>
    </ligand>
</feature>
<feature type="binding site" evidence="1">
    <location>
        <position position="56"/>
    </location>
    <ligand>
        <name>substrate</name>
    </ligand>
</feature>
<feature type="binding site" evidence="1">
    <location>
        <begin position="79"/>
        <end position="82"/>
    </location>
    <ligand>
        <name>substrate</name>
    </ligand>
</feature>
<feature type="binding site" evidence="1">
    <location>
        <position position="139"/>
    </location>
    <ligand>
        <name>substrate</name>
    </ligand>
</feature>
<feature type="binding site" evidence="1">
    <location>
        <position position="172"/>
    </location>
    <ligand>
        <name>substrate</name>
    </ligand>
</feature>
<feature type="binding site" evidence="1">
    <location>
        <position position="222"/>
    </location>
    <ligand>
        <name>ATP</name>
        <dbReference type="ChEBI" id="CHEBI:30616"/>
    </ligand>
</feature>
<feature type="binding site" evidence="1">
    <location>
        <position position="310"/>
    </location>
    <ligand>
        <name>ATP</name>
        <dbReference type="ChEBI" id="CHEBI:30616"/>
    </ligand>
</feature>
<feature type="binding site" evidence="1">
    <location>
        <position position="341"/>
    </location>
    <ligand>
        <name>ATP</name>
        <dbReference type="ChEBI" id="CHEBI:30616"/>
    </ligand>
</feature>
<feature type="binding site" evidence="1">
    <location>
        <begin position="369"/>
        <end position="372"/>
    </location>
    <ligand>
        <name>ATP</name>
        <dbReference type="ChEBI" id="CHEBI:30616"/>
    </ligand>
</feature>
<name>PGK_DEIRA</name>
<dbReference type="EC" id="2.7.2.3" evidence="1"/>
<dbReference type="EMBL" id="AE000513">
    <property type="protein sequence ID" value="AAF10913.1"/>
    <property type="molecule type" value="Genomic_DNA"/>
</dbReference>
<dbReference type="PIR" id="D75408">
    <property type="entry name" value="D75408"/>
</dbReference>
<dbReference type="RefSeq" id="NP_295065.1">
    <property type="nucleotide sequence ID" value="NC_001263.1"/>
</dbReference>
<dbReference type="SMR" id="Q9RUP2"/>
<dbReference type="FunCoup" id="Q9RUP2">
    <property type="interactions" value="403"/>
</dbReference>
<dbReference type="STRING" id="243230.DR_1342"/>
<dbReference type="PaxDb" id="243230-DR_1342"/>
<dbReference type="EnsemblBacteria" id="AAF10913">
    <property type="protein sequence ID" value="AAF10913"/>
    <property type="gene ID" value="DR_1342"/>
</dbReference>
<dbReference type="KEGG" id="dra:DR_1342"/>
<dbReference type="PATRIC" id="fig|243230.17.peg.1539"/>
<dbReference type="eggNOG" id="COG0126">
    <property type="taxonomic scope" value="Bacteria"/>
</dbReference>
<dbReference type="HOGENOM" id="CLU_025427_0_2_0"/>
<dbReference type="InParanoid" id="Q9RUP2"/>
<dbReference type="OrthoDB" id="9808460at2"/>
<dbReference type="UniPathway" id="UPA00109">
    <property type="reaction ID" value="UER00185"/>
</dbReference>
<dbReference type="Proteomes" id="UP000002524">
    <property type="component" value="Chromosome 1"/>
</dbReference>
<dbReference type="GO" id="GO:0005829">
    <property type="term" value="C:cytosol"/>
    <property type="evidence" value="ECO:0000318"/>
    <property type="project" value="GO_Central"/>
</dbReference>
<dbReference type="GO" id="GO:0043531">
    <property type="term" value="F:ADP binding"/>
    <property type="evidence" value="ECO:0000318"/>
    <property type="project" value="GO_Central"/>
</dbReference>
<dbReference type="GO" id="GO:0005524">
    <property type="term" value="F:ATP binding"/>
    <property type="evidence" value="ECO:0000318"/>
    <property type="project" value="GO_Central"/>
</dbReference>
<dbReference type="GO" id="GO:0004618">
    <property type="term" value="F:phosphoglycerate kinase activity"/>
    <property type="evidence" value="ECO:0000318"/>
    <property type="project" value="GO_Central"/>
</dbReference>
<dbReference type="GO" id="GO:0006094">
    <property type="term" value="P:gluconeogenesis"/>
    <property type="evidence" value="ECO:0000318"/>
    <property type="project" value="GO_Central"/>
</dbReference>
<dbReference type="GO" id="GO:0006096">
    <property type="term" value="P:glycolytic process"/>
    <property type="evidence" value="ECO:0000318"/>
    <property type="project" value="GO_Central"/>
</dbReference>
<dbReference type="CDD" id="cd00318">
    <property type="entry name" value="Phosphoglycerate_kinase"/>
    <property type="match status" value="1"/>
</dbReference>
<dbReference type="FunFam" id="3.40.50.1260:FF:000003">
    <property type="entry name" value="Phosphoglycerate kinase"/>
    <property type="match status" value="1"/>
</dbReference>
<dbReference type="FunFam" id="3.40.50.1260:FF:000006">
    <property type="entry name" value="Phosphoglycerate kinase"/>
    <property type="match status" value="1"/>
</dbReference>
<dbReference type="Gene3D" id="3.40.50.1260">
    <property type="entry name" value="Phosphoglycerate kinase, N-terminal domain"/>
    <property type="match status" value="2"/>
</dbReference>
<dbReference type="HAMAP" id="MF_00145">
    <property type="entry name" value="Phosphoglyc_kinase"/>
    <property type="match status" value="1"/>
</dbReference>
<dbReference type="InterPro" id="IPR001576">
    <property type="entry name" value="Phosphoglycerate_kinase"/>
</dbReference>
<dbReference type="InterPro" id="IPR015911">
    <property type="entry name" value="Phosphoglycerate_kinase_CS"/>
</dbReference>
<dbReference type="InterPro" id="IPR015824">
    <property type="entry name" value="Phosphoglycerate_kinase_N"/>
</dbReference>
<dbReference type="InterPro" id="IPR036043">
    <property type="entry name" value="Phosphoglycerate_kinase_sf"/>
</dbReference>
<dbReference type="PANTHER" id="PTHR11406">
    <property type="entry name" value="PHOSPHOGLYCERATE KINASE"/>
    <property type="match status" value="1"/>
</dbReference>
<dbReference type="PANTHER" id="PTHR11406:SF23">
    <property type="entry name" value="PHOSPHOGLYCERATE KINASE 1, CHLOROPLASTIC-RELATED"/>
    <property type="match status" value="1"/>
</dbReference>
<dbReference type="Pfam" id="PF00162">
    <property type="entry name" value="PGK"/>
    <property type="match status" value="1"/>
</dbReference>
<dbReference type="PIRSF" id="PIRSF000724">
    <property type="entry name" value="Pgk"/>
    <property type="match status" value="1"/>
</dbReference>
<dbReference type="PRINTS" id="PR00477">
    <property type="entry name" value="PHGLYCKINASE"/>
</dbReference>
<dbReference type="SUPFAM" id="SSF53748">
    <property type="entry name" value="Phosphoglycerate kinase"/>
    <property type="match status" value="1"/>
</dbReference>
<dbReference type="PROSITE" id="PS00111">
    <property type="entry name" value="PGLYCERATE_KINASE"/>
    <property type="match status" value="1"/>
</dbReference>
<sequence>MTGLCPLHQPSPLDHPHSGGTPMQNLSQLDVKGKRVLVRVDYNVPVGDGVVQDDTRITASVPTIKKLLDGGASVVLMSHFGRPKNGPEDKYSLKPVAEAVSRALGQDVKFIPSLPGSDETLQAVQALRPGEVALLENVRFEAGEEKNDAALNDKLAKLGDAFVLDAFGSAHRAHSSVSGVAGKLPHAAGGLLQSEVDALGKLLHAPEHPYVVIIGGAKVSDKIKVIENLLPKVDRMLIGGGMMFTFIKARGGQIGNSLVEDDQLDLAKGLLEKYGDKLLLPTDAVAADKFAADAQSKVVPADQIPDGWMGLDIGPDTQRAYADALQGAKTVFWNGPMGVFEFDQFAAGTNAVAAAVGSLKDQAYTVVGGGDSVSAINKSGKADQIDHISTGGGASLELLEGKELPGVVAMA</sequence>
<comment type="catalytic activity">
    <reaction evidence="1">
        <text>(2R)-3-phosphoglycerate + ATP = (2R)-3-phospho-glyceroyl phosphate + ADP</text>
        <dbReference type="Rhea" id="RHEA:14801"/>
        <dbReference type="ChEBI" id="CHEBI:30616"/>
        <dbReference type="ChEBI" id="CHEBI:57604"/>
        <dbReference type="ChEBI" id="CHEBI:58272"/>
        <dbReference type="ChEBI" id="CHEBI:456216"/>
        <dbReference type="EC" id="2.7.2.3"/>
    </reaction>
</comment>
<comment type="pathway">
    <text evidence="1">Carbohydrate degradation; glycolysis; pyruvate from D-glyceraldehyde 3-phosphate: step 2/5.</text>
</comment>
<comment type="subunit">
    <text evidence="1">Monomer.</text>
</comment>
<comment type="subcellular location">
    <subcellularLocation>
        <location evidence="1">Cytoplasm</location>
    </subcellularLocation>
</comment>
<comment type="similarity">
    <text evidence="1">Belongs to the phosphoglycerate kinase family.</text>
</comment>
<keyword id="KW-0067">ATP-binding</keyword>
<keyword id="KW-0963">Cytoplasm</keyword>
<keyword id="KW-0324">Glycolysis</keyword>
<keyword id="KW-0418">Kinase</keyword>
<keyword id="KW-0547">Nucleotide-binding</keyword>
<keyword id="KW-1185">Reference proteome</keyword>
<keyword id="KW-0808">Transferase</keyword>
<gene>
    <name evidence="1" type="primary">pgk</name>
    <name type="ordered locus">DR_1342</name>
</gene>
<organism>
    <name type="scientific">Deinococcus radiodurans (strain ATCC 13939 / DSM 20539 / JCM 16871 / CCUG 27074 / LMG 4051 / NBRC 15346 / NCIMB 9279 / VKM B-1422 / R1)</name>
    <dbReference type="NCBI Taxonomy" id="243230"/>
    <lineage>
        <taxon>Bacteria</taxon>
        <taxon>Thermotogati</taxon>
        <taxon>Deinococcota</taxon>
        <taxon>Deinococci</taxon>
        <taxon>Deinococcales</taxon>
        <taxon>Deinococcaceae</taxon>
        <taxon>Deinococcus</taxon>
    </lineage>
</organism>